<sequence length="535" mass="61939">MESITLDIELLQLPETSPMSMKSNQDFVKKLFDQWLALPETNRLVTSLVNDAKAGVALNVMCGGGSSGTNSGSNSPLASMFPARNGPPLSPRNSTGSPRIARQRTGLSNLSSPLKVVSDHVKELIPQFYFEDGRPPPNDLKEQCIAKINSLFYGHEDGLQLQEFKLVTTEICKVPSFFSTSIFKKVDTNNTGFVKREDFIDYWVKGNMLTKEITSQVFTILKQPDHNYLVQDDFKPVLQELLATHPGLEFLQGTPEFQDRYAETVIYRIYYYINRSGNGHLTLRELKRGNLVDAMQHADEEEDINKVLRYFSYEHFYVIYCKFWELDTDHDFLIDKENLIRYSNHALTYRIVDRIFSQVPRKFTSKTEGKMGYEDFVYFILAEEDKSSEPSLEYWFKCIDLDANGVLTRNELQFFYEEQLHRMECMAQEAVLFEDILCQLFDMVKPEDEGFICLNDLKGSKLSGNVFNILFNLNKFMAFETRDPFLIRQERANPTWTEWDRFAHREYIRLSMEEDVEDASNGSAEAWDDSLEVPF</sequence>
<reference key="1">
    <citation type="journal article" date="2000" name="Nature">
        <title>Sequence and analysis of chromosome 1 of the plant Arabidopsis thaliana.</title>
        <authorList>
            <person name="Theologis A."/>
            <person name="Ecker J.R."/>
            <person name="Palm C.J."/>
            <person name="Federspiel N.A."/>
            <person name="Kaul S."/>
            <person name="White O."/>
            <person name="Alonso J."/>
            <person name="Altafi H."/>
            <person name="Araujo R."/>
            <person name="Bowman C.L."/>
            <person name="Brooks S.Y."/>
            <person name="Buehler E."/>
            <person name="Chan A."/>
            <person name="Chao Q."/>
            <person name="Chen H."/>
            <person name="Cheuk R.F."/>
            <person name="Chin C.W."/>
            <person name="Chung M.K."/>
            <person name="Conn L."/>
            <person name="Conway A.B."/>
            <person name="Conway A.R."/>
            <person name="Creasy T.H."/>
            <person name="Dewar K."/>
            <person name="Dunn P."/>
            <person name="Etgu P."/>
            <person name="Feldblyum T.V."/>
            <person name="Feng J.-D."/>
            <person name="Fong B."/>
            <person name="Fujii C.Y."/>
            <person name="Gill J.E."/>
            <person name="Goldsmith A.D."/>
            <person name="Haas B."/>
            <person name="Hansen N.F."/>
            <person name="Hughes B."/>
            <person name="Huizar L."/>
            <person name="Hunter J.L."/>
            <person name="Jenkins J."/>
            <person name="Johnson-Hopson C."/>
            <person name="Khan S."/>
            <person name="Khaykin E."/>
            <person name="Kim C.J."/>
            <person name="Koo H.L."/>
            <person name="Kremenetskaia I."/>
            <person name="Kurtz D.B."/>
            <person name="Kwan A."/>
            <person name="Lam B."/>
            <person name="Langin-Hooper S."/>
            <person name="Lee A."/>
            <person name="Lee J.M."/>
            <person name="Lenz C.A."/>
            <person name="Li J.H."/>
            <person name="Li Y.-P."/>
            <person name="Lin X."/>
            <person name="Liu S.X."/>
            <person name="Liu Z.A."/>
            <person name="Luros J.S."/>
            <person name="Maiti R."/>
            <person name="Marziali A."/>
            <person name="Militscher J."/>
            <person name="Miranda M."/>
            <person name="Nguyen M."/>
            <person name="Nierman W.C."/>
            <person name="Osborne B.I."/>
            <person name="Pai G."/>
            <person name="Peterson J."/>
            <person name="Pham P.K."/>
            <person name="Rizzo M."/>
            <person name="Rooney T."/>
            <person name="Rowley D."/>
            <person name="Sakano H."/>
            <person name="Salzberg S.L."/>
            <person name="Schwartz J.R."/>
            <person name="Shinn P."/>
            <person name="Southwick A.M."/>
            <person name="Sun H."/>
            <person name="Tallon L.J."/>
            <person name="Tambunga G."/>
            <person name="Toriumi M.J."/>
            <person name="Town C.D."/>
            <person name="Utterback T."/>
            <person name="Van Aken S."/>
            <person name="Vaysberg M."/>
            <person name="Vysotskaia V.S."/>
            <person name="Walker M."/>
            <person name="Wu D."/>
            <person name="Yu G."/>
            <person name="Fraser C.M."/>
            <person name="Venter J.C."/>
            <person name="Davis R.W."/>
        </authorList>
    </citation>
    <scope>NUCLEOTIDE SEQUENCE [LARGE SCALE GENOMIC DNA]</scope>
    <source>
        <strain>cv. Columbia</strain>
    </source>
</reference>
<reference key="2">
    <citation type="journal article" date="2017" name="Plant J.">
        <title>Araport11: a complete reannotation of the Arabidopsis thaliana reference genome.</title>
        <authorList>
            <person name="Cheng C.Y."/>
            <person name="Krishnakumar V."/>
            <person name="Chan A.P."/>
            <person name="Thibaud-Nissen F."/>
            <person name="Schobel S."/>
            <person name="Town C.D."/>
        </authorList>
    </citation>
    <scope>GENOME REANNOTATION</scope>
    <source>
        <strain>cv. Columbia</strain>
    </source>
</reference>
<reference key="3">
    <citation type="journal article" date="2011" name="Plant Cell">
        <title>Multilevel control of Arabidopsis 3-hydroxy-3-methylglutaryl coenzyme A reductase by protein phosphatase 2A.</title>
        <authorList>
            <person name="Leivar P."/>
            <person name="Antolin-Llovera M."/>
            <person name="Ferrero S."/>
            <person name="Closa M."/>
            <person name="Arro M."/>
            <person name="Ferrer A."/>
            <person name="Boronat A."/>
            <person name="Campos N."/>
        </authorList>
    </citation>
    <scope>GENE FAMILY</scope>
    <scope>NOMENCLATURE</scope>
</reference>
<accession>Q9SLI8</accession>
<organism>
    <name type="scientific">Arabidopsis thaliana</name>
    <name type="common">Mouse-ear cress</name>
    <dbReference type="NCBI Taxonomy" id="3702"/>
    <lineage>
        <taxon>Eukaryota</taxon>
        <taxon>Viridiplantae</taxon>
        <taxon>Streptophyta</taxon>
        <taxon>Embryophyta</taxon>
        <taxon>Tracheophyta</taxon>
        <taxon>Spermatophyta</taxon>
        <taxon>Magnoliopsida</taxon>
        <taxon>eudicotyledons</taxon>
        <taxon>Gunneridae</taxon>
        <taxon>Pentapetalae</taxon>
        <taxon>rosids</taxon>
        <taxon>malvids</taxon>
        <taxon>Brassicales</taxon>
        <taxon>Brassicaceae</taxon>
        <taxon>Camelineae</taxon>
        <taxon>Arabidopsis</taxon>
    </lineage>
</organism>
<dbReference type="EMBL" id="AC005287">
    <property type="protein sequence ID" value="AAD25624.1"/>
    <property type="molecule type" value="Genomic_DNA"/>
</dbReference>
<dbReference type="EMBL" id="CP002684">
    <property type="protein sequence ID" value="AEE33105.1"/>
    <property type="molecule type" value="Genomic_DNA"/>
</dbReference>
<dbReference type="PIR" id="D96586">
    <property type="entry name" value="D96586"/>
</dbReference>
<dbReference type="RefSeq" id="NP_175847.1">
    <property type="nucleotide sequence ID" value="NM_104323.4"/>
</dbReference>
<dbReference type="SMR" id="Q9SLI8"/>
<dbReference type="BioGRID" id="27112">
    <property type="interactions" value="5"/>
</dbReference>
<dbReference type="FunCoup" id="Q9SLI8">
    <property type="interactions" value="1275"/>
</dbReference>
<dbReference type="STRING" id="3702.Q9SLI8"/>
<dbReference type="iPTMnet" id="Q9SLI8"/>
<dbReference type="PaxDb" id="3702-AT1G54450.1"/>
<dbReference type="ProteomicsDB" id="244503"/>
<dbReference type="DNASU" id="841887"/>
<dbReference type="EnsemblPlants" id="AT1G54450.1">
    <property type="protein sequence ID" value="AT1G54450.1"/>
    <property type="gene ID" value="AT1G54450"/>
</dbReference>
<dbReference type="GeneID" id="841887"/>
<dbReference type="Gramene" id="AT1G54450.1">
    <property type="protein sequence ID" value="AT1G54450.1"/>
    <property type="gene ID" value="AT1G54450"/>
</dbReference>
<dbReference type="KEGG" id="ath:AT1G54450"/>
<dbReference type="Araport" id="AT1G54450"/>
<dbReference type="TAIR" id="AT1G54450"/>
<dbReference type="eggNOG" id="KOG2562">
    <property type="taxonomic scope" value="Eukaryota"/>
</dbReference>
<dbReference type="HOGENOM" id="CLU_019589_3_0_1"/>
<dbReference type="InParanoid" id="Q9SLI8"/>
<dbReference type="OMA" id="QMMALQD"/>
<dbReference type="OrthoDB" id="5586at2759"/>
<dbReference type="PhylomeDB" id="Q9SLI8"/>
<dbReference type="PRO" id="PR:Q9SLI8"/>
<dbReference type="Proteomes" id="UP000006548">
    <property type="component" value="Chromosome 1"/>
</dbReference>
<dbReference type="ExpressionAtlas" id="Q9SLI8">
    <property type="expression patterns" value="baseline and differential"/>
</dbReference>
<dbReference type="GO" id="GO:0005509">
    <property type="term" value="F:calcium ion binding"/>
    <property type="evidence" value="ECO:0007669"/>
    <property type="project" value="InterPro"/>
</dbReference>
<dbReference type="CDD" id="cd21504">
    <property type="entry name" value="PPP2R3A_B-like"/>
    <property type="match status" value="1"/>
</dbReference>
<dbReference type="FunFam" id="1.10.238.220:FF:000003">
    <property type="entry name" value="Phosphoprotein phosphatase 2A regulatory subunit"/>
    <property type="match status" value="1"/>
</dbReference>
<dbReference type="FunFam" id="1.10.238.230:FF:000002">
    <property type="entry name" value="Serine/threonine protein phosphatase 2A regulatory subunit B''alpha"/>
    <property type="match status" value="1"/>
</dbReference>
<dbReference type="FunFam" id="1.10.238.10:FF:000067">
    <property type="entry name" value="serine/threonine protein phosphatase 2A regulatory subunit B''beta-like"/>
    <property type="match status" value="1"/>
</dbReference>
<dbReference type="Gene3D" id="1.10.238.220">
    <property type="match status" value="1"/>
</dbReference>
<dbReference type="Gene3D" id="1.10.238.230">
    <property type="match status" value="1"/>
</dbReference>
<dbReference type="Gene3D" id="1.10.238.10">
    <property type="entry name" value="EF-hand"/>
    <property type="match status" value="1"/>
</dbReference>
<dbReference type="InterPro" id="IPR011992">
    <property type="entry name" value="EF-hand-dom_pair"/>
</dbReference>
<dbReference type="InterPro" id="IPR041534">
    <property type="entry name" value="EF-hand_13"/>
</dbReference>
<dbReference type="InterPro" id="IPR018247">
    <property type="entry name" value="EF_Hand_1_Ca_BS"/>
</dbReference>
<dbReference type="InterPro" id="IPR002048">
    <property type="entry name" value="EF_hand_dom"/>
</dbReference>
<dbReference type="PANTHER" id="PTHR14095">
    <property type="entry name" value="PHOSPHATASE 2A REGULATORY SUBUNIT-RELATED"/>
    <property type="match status" value="1"/>
</dbReference>
<dbReference type="PANTHER" id="PTHR14095:SF12">
    <property type="entry name" value="SERINE_THREONINE PROTEIN PHOSPHATASE 2A REGULATORY SUBUNIT B''DELTA-RELATED"/>
    <property type="match status" value="1"/>
</dbReference>
<dbReference type="Pfam" id="PF17958">
    <property type="entry name" value="EF-hand_13"/>
    <property type="match status" value="1"/>
</dbReference>
<dbReference type="Pfam" id="PF13499">
    <property type="entry name" value="EF-hand_7"/>
    <property type="match status" value="1"/>
</dbReference>
<dbReference type="SUPFAM" id="SSF47473">
    <property type="entry name" value="EF-hand"/>
    <property type="match status" value="2"/>
</dbReference>
<dbReference type="PROSITE" id="PS00018">
    <property type="entry name" value="EF_HAND_1"/>
    <property type="match status" value="1"/>
</dbReference>
<dbReference type="PROSITE" id="PS50222">
    <property type="entry name" value="EF_HAND_2"/>
    <property type="match status" value="2"/>
</dbReference>
<keyword id="KW-0106">Calcium</keyword>
<keyword id="KW-0479">Metal-binding</keyword>
<keyword id="KW-1185">Reference proteome</keyword>
<keyword id="KW-0677">Repeat</keyword>
<evidence type="ECO:0000250" key="1"/>
<evidence type="ECO:0000255" key="2">
    <source>
        <dbReference type="PROSITE-ProRule" id="PRU00448"/>
    </source>
</evidence>
<evidence type="ECO:0000256" key="3">
    <source>
        <dbReference type="SAM" id="MobiDB-lite"/>
    </source>
</evidence>
<proteinExistence type="inferred from homology"/>
<name>2AB2D_ARATH</name>
<gene>
    <name type="primary">B''DELTA</name>
    <name type="ordered locus">At1g54450</name>
    <name type="ORF">F20D21.27</name>
</gene>
<comment type="function">
    <text evidence="1">Probable regulatory subunit of type 2A protein phosphatase.</text>
</comment>
<comment type="subunit">
    <text evidence="1">PP2A consists of a common heterodimeric core enzyme, composed of a 36 kDa catalytic subunit (subunit C) and a 65 kDa constant regulatory subunit (PR65 or subunit A), that associates with a variety of regulatory subunits. Proteins that associate with the core dimer include three families of regulatory subunits B (the R2/B/PR55/B55, R3/B''/PR72/PR130/PR59 and R5/B'/B56 families) and cell signaling molecules (By similarity).</text>
</comment>
<feature type="chain" id="PRO_0000422790" description="Probable serine/threonine protein phosphatase 2A regulatory subunit B''delta">
    <location>
        <begin position="1"/>
        <end position="535"/>
    </location>
</feature>
<feature type="domain" description="EF-hand 1" evidence="2">
    <location>
        <begin position="174"/>
        <end position="209"/>
    </location>
</feature>
<feature type="domain" description="EF-hand 2" evidence="2">
    <location>
        <begin position="387"/>
        <end position="422"/>
    </location>
</feature>
<feature type="region of interest" description="Disordered" evidence="3">
    <location>
        <begin position="67"/>
        <end position="104"/>
    </location>
</feature>
<feature type="binding site" evidence="2">
    <location>
        <position position="400"/>
    </location>
    <ligand>
        <name>Ca(2+)</name>
        <dbReference type="ChEBI" id="CHEBI:29108"/>
    </ligand>
</feature>
<feature type="binding site" evidence="2">
    <location>
        <position position="402"/>
    </location>
    <ligand>
        <name>Ca(2+)</name>
        <dbReference type="ChEBI" id="CHEBI:29108"/>
    </ligand>
</feature>
<feature type="binding site" evidence="2">
    <location>
        <position position="404"/>
    </location>
    <ligand>
        <name>Ca(2+)</name>
        <dbReference type="ChEBI" id="CHEBI:29108"/>
    </ligand>
</feature>
<feature type="binding site" evidence="2">
    <location>
        <position position="411"/>
    </location>
    <ligand>
        <name>Ca(2+)</name>
        <dbReference type="ChEBI" id="CHEBI:29108"/>
    </ligand>
</feature>
<protein>
    <recommendedName>
        <fullName>Probable serine/threonine protein phosphatase 2A regulatory subunit B''delta</fullName>
        <shortName>AtB''delta</shortName>
    </recommendedName>
</protein>